<evidence type="ECO:0000250" key="1"/>
<evidence type="ECO:0000255" key="2">
    <source>
        <dbReference type="PROSITE-ProRule" id="PRU00507"/>
    </source>
</evidence>
<evidence type="ECO:0000256" key="3">
    <source>
        <dbReference type="SAM" id="MobiDB-lite"/>
    </source>
</evidence>
<evidence type="ECO:0000305" key="4"/>
<feature type="chain" id="PRO_0000273503" description="Nascent polypeptide-associated complex subunit beta">
    <location>
        <begin position="1"/>
        <end position="167"/>
    </location>
</feature>
<feature type="domain" description="NAC-A/B" evidence="2">
    <location>
        <begin position="45"/>
        <end position="110"/>
    </location>
</feature>
<feature type="region of interest" description="Disordered" evidence="3">
    <location>
        <begin position="1"/>
        <end position="48"/>
    </location>
</feature>
<feature type="region of interest" description="Disordered" evidence="3">
    <location>
        <begin position="133"/>
        <end position="167"/>
    </location>
</feature>
<feature type="compositionally biased region" description="Basic residues" evidence="3">
    <location>
        <begin position="25"/>
        <end position="42"/>
    </location>
</feature>
<feature type="compositionally biased region" description="Acidic residues" evidence="3">
    <location>
        <begin position="148"/>
        <end position="161"/>
    </location>
</feature>
<organism>
    <name type="scientific">Aspergillus terreus (strain NIH 2624 / FGSC A1156)</name>
    <dbReference type="NCBI Taxonomy" id="341663"/>
    <lineage>
        <taxon>Eukaryota</taxon>
        <taxon>Fungi</taxon>
        <taxon>Dikarya</taxon>
        <taxon>Ascomycota</taxon>
        <taxon>Pezizomycotina</taxon>
        <taxon>Eurotiomycetes</taxon>
        <taxon>Eurotiomycetidae</taxon>
        <taxon>Eurotiales</taxon>
        <taxon>Aspergillaceae</taxon>
        <taxon>Aspergillus</taxon>
        <taxon>Aspergillus subgen. Circumdati</taxon>
    </lineage>
</organism>
<proteinExistence type="inferred from homology"/>
<name>NACB_ASPTN</name>
<accession>Q0CGL5</accession>
<keyword id="KW-0963">Cytoplasm</keyword>
<keyword id="KW-0539">Nucleus</keyword>
<keyword id="KW-0653">Protein transport</keyword>
<keyword id="KW-1185">Reference proteome</keyword>
<keyword id="KW-0678">Repressor</keyword>
<keyword id="KW-0804">Transcription</keyword>
<keyword id="KW-0805">Transcription regulation</keyword>
<keyword id="KW-0813">Transport</keyword>
<reference key="1">
    <citation type="submission" date="2005-09" db="EMBL/GenBank/DDBJ databases">
        <title>Annotation of the Aspergillus terreus NIH2624 genome.</title>
        <authorList>
            <person name="Birren B.W."/>
            <person name="Lander E.S."/>
            <person name="Galagan J.E."/>
            <person name="Nusbaum C."/>
            <person name="Devon K."/>
            <person name="Henn M."/>
            <person name="Ma L.-J."/>
            <person name="Jaffe D.B."/>
            <person name="Butler J."/>
            <person name="Alvarez P."/>
            <person name="Gnerre S."/>
            <person name="Grabherr M."/>
            <person name="Kleber M."/>
            <person name="Mauceli E.W."/>
            <person name="Brockman W."/>
            <person name="Rounsley S."/>
            <person name="Young S.K."/>
            <person name="LaButti K."/>
            <person name="Pushparaj V."/>
            <person name="DeCaprio D."/>
            <person name="Crawford M."/>
            <person name="Koehrsen M."/>
            <person name="Engels R."/>
            <person name="Montgomery P."/>
            <person name="Pearson M."/>
            <person name="Howarth C."/>
            <person name="Larson L."/>
            <person name="Luoma S."/>
            <person name="White J."/>
            <person name="Alvarado L."/>
            <person name="Kodira C.D."/>
            <person name="Zeng Q."/>
            <person name="Oleary S."/>
            <person name="Yandava C."/>
            <person name="Denning D.W."/>
            <person name="Nierman W.C."/>
            <person name="Milne T."/>
            <person name="Madden K."/>
        </authorList>
    </citation>
    <scope>NUCLEOTIDE SEQUENCE [LARGE SCALE GENOMIC DNA]</scope>
    <source>
        <strain>NIH 2624 / FGSC A1156</strain>
    </source>
</reference>
<dbReference type="EMBL" id="CH476603">
    <property type="protein sequence ID" value="EAU32561.1"/>
    <property type="molecule type" value="Genomic_DNA"/>
</dbReference>
<dbReference type="RefSeq" id="XP_001209863.1">
    <property type="nucleotide sequence ID" value="XM_001209863.1"/>
</dbReference>
<dbReference type="SMR" id="Q0CGL5"/>
<dbReference type="STRING" id="341663.Q0CGL5"/>
<dbReference type="EnsemblFungi" id="EAU32561">
    <property type="protein sequence ID" value="EAU32561"/>
    <property type="gene ID" value="ATEG_07177"/>
</dbReference>
<dbReference type="GeneID" id="4319132"/>
<dbReference type="VEuPathDB" id="FungiDB:ATEG_07177"/>
<dbReference type="eggNOG" id="KOG2240">
    <property type="taxonomic scope" value="Eukaryota"/>
</dbReference>
<dbReference type="HOGENOM" id="CLU_098726_2_0_1"/>
<dbReference type="OMA" id="RMQQSVR"/>
<dbReference type="OrthoDB" id="8033832at2759"/>
<dbReference type="Proteomes" id="UP000007963">
    <property type="component" value="Unassembled WGS sequence"/>
</dbReference>
<dbReference type="GO" id="GO:0005854">
    <property type="term" value="C:nascent polypeptide-associated complex"/>
    <property type="evidence" value="ECO:0007669"/>
    <property type="project" value="EnsemblFungi"/>
</dbReference>
<dbReference type="GO" id="GO:0005634">
    <property type="term" value="C:nucleus"/>
    <property type="evidence" value="ECO:0007669"/>
    <property type="project" value="UniProtKB-SubCell"/>
</dbReference>
<dbReference type="GO" id="GO:0015031">
    <property type="term" value="P:protein transport"/>
    <property type="evidence" value="ECO:0007669"/>
    <property type="project" value="UniProtKB-KW"/>
</dbReference>
<dbReference type="CDD" id="cd22055">
    <property type="entry name" value="NAC_BTF3"/>
    <property type="match status" value="1"/>
</dbReference>
<dbReference type="FunFam" id="2.20.70.30:FF:000003">
    <property type="entry name" value="Nascent polypeptide-associated complex subunit beta"/>
    <property type="match status" value="1"/>
</dbReference>
<dbReference type="Gene3D" id="2.20.70.30">
    <property type="entry name" value="Nascent polypeptide-associated complex domain"/>
    <property type="match status" value="1"/>
</dbReference>
<dbReference type="InterPro" id="IPR039370">
    <property type="entry name" value="BTF3"/>
</dbReference>
<dbReference type="InterPro" id="IPR038187">
    <property type="entry name" value="NAC_A/B_dom_sf"/>
</dbReference>
<dbReference type="InterPro" id="IPR002715">
    <property type="entry name" value="Nas_poly-pep-assoc_cplx_dom"/>
</dbReference>
<dbReference type="PANTHER" id="PTHR10351">
    <property type="entry name" value="TRANSCRIPTION FACTOR BTF3 FAMILY MEMBER"/>
    <property type="match status" value="1"/>
</dbReference>
<dbReference type="Pfam" id="PF01849">
    <property type="entry name" value="NAC"/>
    <property type="match status" value="1"/>
</dbReference>
<dbReference type="SMART" id="SM01407">
    <property type="entry name" value="NAC"/>
    <property type="match status" value="1"/>
</dbReference>
<dbReference type="PROSITE" id="PS51151">
    <property type="entry name" value="NAC_AB"/>
    <property type="match status" value="1"/>
</dbReference>
<protein>
    <recommendedName>
        <fullName>Nascent polypeptide-associated complex subunit beta</fullName>
        <shortName>NAC-beta</shortName>
    </recommendedName>
    <alternativeName>
        <fullName>Beta-NAC</fullName>
    </alternativeName>
</protein>
<gene>
    <name type="primary">egd1</name>
    <name type="ORF">ATEG_07177</name>
</gene>
<sequence length="167" mass="18361">MDQAKLARMQASVRIGNPPSGPRANRNRGKGTPRRKVKKVHKSSGADDKKLQATLKKMNVQPIPAVEEVNMFKEDGNVIHFGNPRVHASVPSNTFALYGNGEEKELTELVPGILNQLGPDSLASLRKLAESYQNMQKNQAGAEGKKDDEEDDIPDLVEGQDFESKVE</sequence>
<comment type="function">
    <text evidence="1">Component of the nascent polypeptide-associated complex (NAC), a dynamic component of the ribosomal exit tunnel, protecting the emerging polypeptides from interaction with other cytoplasmic proteins to ensure appropriate nascent protein targeting. The NAC complex also promotes mitochondrial protein import by enhancing productive ribosome interactions with the outer mitochondrial membrane and blocks the inappropriate interaction of ribosomes translating non-secretory nascent polypeptides with translocation sites in the membrane of the endoplasmic reticulum. EGD1 may act as a transcription factor that exert a negative effect on the expression of several genes that are transcribed by RNA polymerase II.</text>
</comment>
<comment type="subunit">
    <text evidence="1">Part of the nascent polypeptide-associated complex (NAC), consisting of egd2 and egd1. NAC associates with ribosomes via egd1 (By similarity).</text>
</comment>
<comment type="subcellular location">
    <subcellularLocation>
        <location evidence="1">Cytoplasm</location>
    </subcellularLocation>
    <subcellularLocation>
        <location evidence="1">Nucleus</location>
    </subcellularLocation>
    <text evidence="1">Predominantly cytoplasmic, may also transiently localize to the nucleus.</text>
</comment>
<comment type="similarity">
    <text evidence="4">Belongs to the NAC-beta family.</text>
</comment>